<organism>
    <name type="scientific">Vibrio vulnificus (strain CMCP6)</name>
    <dbReference type="NCBI Taxonomy" id="216895"/>
    <lineage>
        <taxon>Bacteria</taxon>
        <taxon>Pseudomonadati</taxon>
        <taxon>Pseudomonadota</taxon>
        <taxon>Gammaproteobacteria</taxon>
        <taxon>Vibrionales</taxon>
        <taxon>Vibrionaceae</taxon>
        <taxon>Vibrio</taxon>
    </lineage>
</organism>
<accession>Q8DBA6</accession>
<evidence type="ECO:0000255" key="1">
    <source>
        <dbReference type="HAMAP-Rule" id="MF_01690"/>
    </source>
</evidence>
<proteinExistence type="inferred from homology"/>
<comment type="function">
    <text evidence="1">Catalyzes the hydrolysis of N-succinyl-L,L-diaminopimelic acid (SDAP), forming succinate and LL-2,6-diaminopimelate (DAP), an intermediate involved in the bacterial biosynthesis of lysine and meso-diaminopimelic acid, an essential component of bacterial cell walls.</text>
</comment>
<comment type="catalytic activity">
    <reaction evidence="1">
        <text>N-succinyl-(2S,6S)-2,6-diaminopimelate + H2O = (2S,6S)-2,6-diaminopimelate + succinate</text>
        <dbReference type="Rhea" id="RHEA:22608"/>
        <dbReference type="ChEBI" id="CHEBI:15377"/>
        <dbReference type="ChEBI" id="CHEBI:30031"/>
        <dbReference type="ChEBI" id="CHEBI:57609"/>
        <dbReference type="ChEBI" id="CHEBI:58087"/>
        <dbReference type="EC" id="3.5.1.18"/>
    </reaction>
</comment>
<comment type="cofactor">
    <cofactor evidence="1">
        <name>Zn(2+)</name>
        <dbReference type="ChEBI" id="CHEBI:29105"/>
    </cofactor>
    <cofactor evidence="1">
        <name>Co(2+)</name>
        <dbReference type="ChEBI" id="CHEBI:48828"/>
    </cofactor>
    <text evidence="1">Binds 2 Zn(2+) or Co(2+) ions per subunit.</text>
</comment>
<comment type="pathway">
    <text evidence="1">Amino-acid biosynthesis; L-lysine biosynthesis via DAP pathway; LL-2,6-diaminopimelate from (S)-tetrahydrodipicolinate (succinylase route): step 3/3.</text>
</comment>
<comment type="subunit">
    <text evidence="1">Homodimer.</text>
</comment>
<comment type="similarity">
    <text evidence="1">Belongs to the peptidase M20A family. DapE subfamily.</text>
</comment>
<name>DAPE_VIBVU</name>
<gene>
    <name evidence="1" type="primary">dapE</name>
    <name type="ordered locus">VV1_1916</name>
</gene>
<protein>
    <recommendedName>
        <fullName evidence="1">Succinyl-diaminopimelate desuccinylase</fullName>
        <shortName evidence="1">SDAP desuccinylase</shortName>
        <ecNumber evidence="1">3.5.1.18</ecNumber>
    </recommendedName>
    <alternativeName>
        <fullName evidence="1">N-succinyl-LL-2,6-diaminoheptanedioate amidohydrolase</fullName>
    </alternativeName>
</protein>
<feature type="chain" id="PRO_0000375773" description="Succinyl-diaminopimelate desuccinylase">
    <location>
        <begin position="1"/>
        <end position="377"/>
    </location>
</feature>
<feature type="active site" evidence="1">
    <location>
        <position position="70"/>
    </location>
</feature>
<feature type="active site" description="Proton acceptor" evidence="1">
    <location>
        <position position="135"/>
    </location>
</feature>
<feature type="binding site" evidence="1">
    <location>
        <position position="68"/>
    </location>
    <ligand>
        <name>Zn(2+)</name>
        <dbReference type="ChEBI" id="CHEBI:29105"/>
        <label>1</label>
    </ligand>
</feature>
<feature type="binding site" evidence="1">
    <location>
        <position position="101"/>
    </location>
    <ligand>
        <name>Zn(2+)</name>
        <dbReference type="ChEBI" id="CHEBI:29105"/>
        <label>1</label>
    </ligand>
</feature>
<feature type="binding site" evidence="1">
    <location>
        <position position="101"/>
    </location>
    <ligand>
        <name>Zn(2+)</name>
        <dbReference type="ChEBI" id="CHEBI:29105"/>
        <label>2</label>
    </ligand>
</feature>
<feature type="binding site" evidence="1">
    <location>
        <position position="136"/>
    </location>
    <ligand>
        <name>Zn(2+)</name>
        <dbReference type="ChEBI" id="CHEBI:29105"/>
        <label>2</label>
    </ligand>
</feature>
<feature type="binding site" evidence="1">
    <location>
        <position position="164"/>
    </location>
    <ligand>
        <name>Zn(2+)</name>
        <dbReference type="ChEBI" id="CHEBI:29105"/>
        <label>1</label>
    </ligand>
</feature>
<feature type="binding site" evidence="1">
    <location>
        <position position="350"/>
    </location>
    <ligand>
        <name>Zn(2+)</name>
        <dbReference type="ChEBI" id="CHEBI:29105"/>
        <label>2</label>
    </ligand>
</feature>
<keyword id="KW-0028">Amino-acid biosynthesis</keyword>
<keyword id="KW-0170">Cobalt</keyword>
<keyword id="KW-0220">Diaminopimelate biosynthesis</keyword>
<keyword id="KW-0378">Hydrolase</keyword>
<keyword id="KW-0457">Lysine biosynthesis</keyword>
<keyword id="KW-0479">Metal-binding</keyword>
<keyword id="KW-0862">Zinc</keyword>
<dbReference type="EC" id="3.5.1.18" evidence="1"/>
<dbReference type="EMBL" id="AE016795">
    <property type="protein sequence ID" value="AAO10317.1"/>
    <property type="molecule type" value="Genomic_DNA"/>
</dbReference>
<dbReference type="RefSeq" id="WP_011079816.1">
    <property type="nucleotide sequence ID" value="NC_004459.3"/>
</dbReference>
<dbReference type="SMR" id="Q8DBA6"/>
<dbReference type="KEGG" id="vvu:VV1_1916"/>
<dbReference type="HOGENOM" id="CLU_021802_4_0_6"/>
<dbReference type="UniPathway" id="UPA00034">
    <property type="reaction ID" value="UER00021"/>
</dbReference>
<dbReference type="Proteomes" id="UP000002275">
    <property type="component" value="Chromosome 1"/>
</dbReference>
<dbReference type="GO" id="GO:0008777">
    <property type="term" value="F:acetylornithine deacetylase activity"/>
    <property type="evidence" value="ECO:0007669"/>
    <property type="project" value="TreeGrafter"/>
</dbReference>
<dbReference type="GO" id="GO:0050897">
    <property type="term" value="F:cobalt ion binding"/>
    <property type="evidence" value="ECO:0007669"/>
    <property type="project" value="UniProtKB-UniRule"/>
</dbReference>
<dbReference type="GO" id="GO:0009014">
    <property type="term" value="F:succinyl-diaminopimelate desuccinylase activity"/>
    <property type="evidence" value="ECO:0007669"/>
    <property type="project" value="UniProtKB-UniRule"/>
</dbReference>
<dbReference type="GO" id="GO:0008270">
    <property type="term" value="F:zinc ion binding"/>
    <property type="evidence" value="ECO:0007669"/>
    <property type="project" value="UniProtKB-UniRule"/>
</dbReference>
<dbReference type="GO" id="GO:0019877">
    <property type="term" value="P:diaminopimelate biosynthetic process"/>
    <property type="evidence" value="ECO:0007669"/>
    <property type="project" value="UniProtKB-UniRule"/>
</dbReference>
<dbReference type="GO" id="GO:0006526">
    <property type="term" value="P:L-arginine biosynthetic process"/>
    <property type="evidence" value="ECO:0007669"/>
    <property type="project" value="TreeGrafter"/>
</dbReference>
<dbReference type="GO" id="GO:0009089">
    <property type="term" value="P:lysine biosynthetic process via diaminopimelate"/>
    <property type="evidence" value="ECO:0007669"/>
    <property type="project" value="UniProtKB-UniRule"/>
</dbReference>
<dbReference type="CDD" id="cd03891">
    <property type="entry name" value="M20_DapE_proteobac"/>
    <property type="match status" value="1"/>
</dbReference>
<dbReference type="FunFam" id="3.30.70.360:FF:000011">
    <property type="entry name" value="Succinyl-diaminopimelate desuccinylase"/>
    <property type="match status" value="1"/>
</dbReference>
<dbReference type="FunFam" id="3.40.630.10:FF:000005">
    <property type="entry name" value="Succinyl-diaminopimelate desuccinylase"/>
    <property type="match status" value="1"/>
</dbReference>
<dbReference type="Gene3D" id="3.40.630.10">
    <property type="entry name" value="Zn peptidases"/>
    <property type="match status" value="2"/>
</dbReference>
<dbReference type="HAMAP" id="MF_01690">
    <property type="entry name" value="DapE"/>
    <property type="match status" value="1"/>
</dbReference>
<dbReference type="InterPro" id="IPR001261">
    <property type="entry name" value="ArgE/DapE_CS"/>
</dbReference>
<dbReference type="InterPro" id="IPR036264">
    <property type="entry name" value="Bact_exopeptidase_dim_dom"/>
</dbReference>
<dbReference type="InterPro" id="IPR005941">
    <property type="entry name" value="DapE_proteobac"/>
</dbReference>
<dbReference type="InterPro" id="IPR002933">
    <property type="entry name" value="Peptidase_M20"/>
</dbReference>
<dbReference type="InterPro" id="IPR011650">
    <property type="entry name" value="Peptidase_M20_dimer"/>
</dbReference>
<dbReference type="InterPro" id="IPR050072">
    <property type="entry name" value="Peptidase_M20A"/>
</dbReference>
<dbReference type="NCBIfam" id="TIGR01246">
    <property type="entry name" value="dapE_proteo"/>
    <property type="match status" value="1"/>
</dbReference>
<dbReference type="NCBIfam" id="NF009557">
    <property type="entry name" value="PRK13009.1"/>
    <property type="match status" value="1"/>
</dbReference>
<dbReference type="PANTHER" id="PTHR43808">
    <property type="entry name" value="ACETYLORNITHINE DEACETYLASE"/>
    <property type="match status" value="1"/>
</dbReference>
<dbReference type="PANTHER" id="PTHR43808:SF31">
    <property type="entry name" value="N-ACETYL-L-CITRULLINE DEACETYLASE"/>
    <property type="match status" value="1"/>
</dbReference>
<dbReference type="Pfam" id="PF07687">
    <property type="entry name" value="M20_dimer"/>
    <property type="match status" value="1"/>
</dbReference>
<dbReference type="Pfam" id="PF01546">
    <property type="entry name" value="Peptidase_M20"/>
    <property type="match status" value="1"/>
</dbReference>
<dbReference type="SUPFAM" id="SSF55031">
    <property type="entry name" value="Bacterial exopeptidase dimerisation domain"/>
    <property type="match status" value="1"/>
</dbReference>
<dbReference type="SUPFAM" id="SSF53187">
    <property type="entry name" value="Zn-dependent exopeptidases"/>
    <property type="match status" value="1"/>
</dbReference>
<dbReference type="PROSITE" id="PS00759">
    <property type="entry name" value="ARGE_DAPE_CPG2_2"/>
    <property type="match status" value="1"/>
</dbReference>
<sequence length="377" mass="41226">MTDSPVLALTKDLISRQSVTPEDAGCQDVMIARLEALGFTIERMVFEDTTNFWARRGTQAPLFAFAGHTDVVPAGKLEHWHTPPFEPTEKEGYLYGRGAADMKGSLAAMIVATERFIAEHPDHQGSIGFLITSDEEGPFINGTVRVVETLMARDENIDMCIVGEPSSTEVVGDVVKNGRRGSITGDLTVKGTQGHVAYPHLADNPVHKSLLAIHALATTEWDKGNEYFPPTSFQIPNVQAGTGASNVIPGEFHVQFNLRFSTELCNERIVERVTQTLDQHDLNYDLKWTYNGDPFLTDTGALLDAVVDAVDSVNQTKPALLTTGGTSDGRFIARMGGQVVELGPVNATIHKVNECVKIDDLEKLTDMYQKTLENLLA</sequence>
<reference key="1">
    <citation type="submission" date="2002-12" db="EMBL/GenBank/DDBJ databases">
        <title>Complete genome sequence of Vibrio vulnificus CMCP6.</title>
        <authorList>
            <person name="Rhee J.H."/>
            <person name="Kim S.Y."/>
            <person name="Chung S.S."/>
            <person name="Kim J.J."/>
            <person name="Moon Y.H."/>
            <person name="Jeong H."/>
            <person name="Choy H.E."/>
        </authorList>
    </citation>
    <scope>NUCLEOTIDE SEQUENCE [LARGE SCALE GENOMIC DNA]</scope>
    <source>
        <strain>CMCP6</strain>
    </source>
</reference>